<feature type="initiator methionine" description="Removed" evidence="2">
    <location>
        <position position="1"/>
    </location>
</feature>
<feature type="chain" id="PRO_0000224161" description="Large ribosomal subunit protein uL30">
    <location>
        <begin position="2"/>
        <end position="64"/>
    </location>
</feature>
<sequence length="64" mass="7225">MAKAANMIKVEQIGSPIRRHHSQRETLIGLKLNKIGRVAELQDTPEVRGMIGKVQHLVRVVDEK</sequence>
<proteinExistence type="evidence at protein level"/>
<name>RL30_RHOPA</name>
<evidence type="ECO:0000255" key="1">
    <source>
        <dbReference type="HAMAP-Rule" id="MF_01371"/>
    </source>
</evidence>
<evidence type="ECO:0000269" key="2">
    <source>
    </source>
</evidence>
<evidence type="ECO:0000305" key="3"/>
<accession>Q6N4V1</accession>
<organism>
    <name type="scientific">Rhodopseudomonas palustris (strain ATCC BAA-98 / CGA009)</name>
    <dbReference type="NCBI Taxonomy" id="258594"/>
    <lineage>
        <taxon>Bacteria</taxon>
        <taxon>Pseudomonadati</taxon>
        <taxon>Pseudomonadota</taxon>
        <taxon>Alphaproteobacteria</taxon>
        <taxon>Hyphomicrobiales</taxon>
        <taxon>Nitrobacteraceae</taxon>
        <taxon>Rhodopseudomonas</taxon>
    </lineage>
</organism>
<keyword id="KW-0903">Direct protein sequencing</keyword>
<keyword id="KW-0488">Methylation</keyword>
<keyword id="KW-0687">Ribonucleoprotein</keyword>
<keyword id="KW-0689">Ribosomal protein</keyword>
<gene>
    <name evidence="1" type="primary">rpmD</name>
    <name type="ordered locus">RPA3232</name>
</gene>
<comment type="subunit">
    <text>Part of the 50S ribosomal subunit.</text>
</comment>
<comment type="PTM">
    <text>The protein is methylated on either Ala-2 or Lys-3.</text>
</comment>
<comment type="mass spectrometry" mass="7093.0" method="Electrospray" evidence="2"/>
<comment type="similarity">
    <text evidence="1">Belongs to the universal ribosomal protein uL30 family.</text>
</comment>
<dbReference type="EMBL" id="BX572603">
    <property type="protein sequence ID" value="CAE28673.1"/>
    <property type="molecule type" value="Genomic_DNA"/>
</dbReference>
<dbReference type="RefSeq" id="WP_011158777.1">
    <property type="nucleotide sequence ID" value="NZ_CP116810.1"/>
</dbReference>
<dbReference type="SMR" id="Q6N4V1"/>
<dbReference type="IntAct" id="Q6N4V1">
    <property type="interactions" value="1"/>
</dbReference>
<dbReference type="STRING" id="258594.RPA3232"/>
<dbReference type="GeneID" id="66894318"/>
<dbReference type="eggNOG" id="COG1841">
    <property type="taxonomic scope" value="Bacteria"/>
</dbReference>
<dbReference type="HOGENOM" id="CLU_131047_1_2_5"/>
<dbReference type="PhylomeDB" id="Q6N4V1"/>
<dbReference type="GO" id="GO:0022625">
    <property type="term" value="C:cytosolic large ribosomal subunit"/>
    <property type="evidence" value="ECO:0007669"/>
    <property type="project" value="TreeGrafter"/>
</dbReference>
<dbReference type="GO" id="GO:0003735">
    <property type="term" value="F:structural constituent of ribosome"/>
    <property type="evidence" value="ECO:0007669"/>
    <property type="project" value="InterPro"/>
</dbReference>
<dbReference type="GO" id="GO:0006412">
    <property type="term" value="P:translation"/>
    <property type="evidence" value="ECO:0007669"/>
    <property type="project" value="UniProtKB-UniRule"/>
</dbReference>
<dbReference type="CDD" id="cd01658">
    <property type="entry name" value="Ribosomal_L30"/>
    <property type="match status" value="1"/>
</dbReference>
<dbReference type="Gene3D" id="3.30.1390.20">
    <property type="entry name" value="Ribosomal protein L30, ferredoxin-like fold domain"/>
    <property type="match status" value="1"/>
</dbReference>
<dbReference type="HAMAP" id="MF_01371_B">
    <property type="entry name" value="Ribosomal_uL30_B"/>
    <property type="match status" value="1"/>
</dbReference>
<dbReference type="InterPro" id="IPR036919">
    <property type="entry name" value="Ribo_uL30_ferredoxin-like_sf"/>
</dbReference>
<dbReference type="InterPro" id="IPR005996">
    <property type="entry name" value="Ribosomal_uL30_bac-type"/>
</dbReference>
<dbReference type="InterPro" id="IPR016082">
    <property type="entry name" value="Ribosomal_uL30_ferredoxin-like"/>
</dbReference>
<dbReference type="NCBIfam" id="TIGR01308">
    <property type="entry name" value="rpmD_bact"/>
    <property type="match status" value="1"/>
</dbReference>
<dbReference type="PANTHER" id="PTHR15892:SF2">
    <property type="entry name" value="LARGE RIBOSOMAL SUBUNIT PROTEIN UL30M"/>
    <property type="match status" value="1"/>
</dbReference>
<dbReference type="PANTHER" id="PTHR15892">
    <property type="entry name" value="MITOCHONDRIAL RIBOSOMAL PROTEIN L30"/>
    <property type="match status" value="1"/>
</dbReference>
<dbReference type="Pfam" id="PF00327">
    <property type="entry name" value="Ribosomal_L30"/>
    <property type="match status" value="1"/>
</dbReference>
<dbReference type="PIRSF" id="PIRSF002211">
    <property type="entry name" value="Ribosomal_L30_bac-type"/>
    <property type="match status" value="1"/>
</dbReference>
<dbReference type="SUPFAM" id="SSF55129">
    <property type="entry name" value="Ribosomal protein L30p/L7e"/>
    <property type="match status" value="1"/>
</dbReference>
<reference key="1">
    <citation type="journal article" date="2004" name="Nat. Biotechnol.">
        <title>Complete genome sequence of the metabolically versatile photosynthetic bacterium Rhodopseudomonas palustris.</title>
        <authorList>
            <person name="Larimer F.W."/>
            <person name="Chain P."/>
            <person name="Hauser L."/>
            <person name="Lamerdin J.E."/>
            <person name="Malfatti S."/>
            <person name="Do L."/>
            <person name="Land M.L."/>
            <person name="Pelletier D.A."/>
            <person name="Beatty J.T."/>
            <person name="Lang A.S."/>
            <person name="Tabita F.R."/>
            <person name="Gibson J.L."/>
            <person name="Hanson T.E."/>
            <person name="Bobst C."/>
            <person name="Torres y Torres J.L."/>
            <person name="Peres C."/>
            <person name="Harrison F.H."/>
            <person name="Gibson J."/>
            <person name="Harwood C.S."/>
        </authorList>
    </citation>
    <scope>NUCLEOTIDE SEQUENCE [LARGE SCALE GENOMIC DNA]</scope>
    <source>
        <strain>ATCC BAA-98 / CGA009</strain>
    </source>
</reference>
<reference key="2">
    <citation type="journal article" date="2004" name="J. Proteome Res.">
        <title>Characterization of the 70S ribosome from Rhodopseudomonas palustris using an integrated 'top-down' and 'bottom-up' mass spectrometric approach.</title>
        <authorList>
            <person name="Strader M.B."/>
            <person name="VerBerkmoes N.C."/>
            <person name="Tabb D.L."/>
            <person name="Connelly H.M."/>
            <person name="Barton J.W."/>
            <person name="Bruce B.D."/>
            <person name="Pelletier D.A."/>
            <person name="Davison B.H."/>
            <person name="Hettich R.L."/>
            <person name="Larimer F.W."/>
            <person name="Hurst G.B."/>
        </authorList>
    </citation>
    <scope>PROTEIN SEQUENCE OF 2-18</scope>
    <scope>POST-TRANSLATIONAL MODIFICATION</scope>
    <scope>MASS SPECTROMETRY</scope>
    <source>
        <strain>ATCC BAA-98 / CGA009</strain>
    </source>
</reference>
<protein>
    <recommendedName>
        <fullName evidence="1">Large ribosomal subunit protein uL30</fullName>
    </recommendedName>
    <alternativeName>
        <fullName evidence="3">50S ribosomal protein L30</fullName>
    </alternativeName>
    <alternativeName>
        <fullName>RRP-L30</fullName>
    </alternativeName>
</protein>